<proteinExistence type="evidence at protein level"/>
<evidence type="ECO:0000250" key="1"/>
<evidence type="ECO:0000256" key="2">
    <source>
        <dbReference type="SAM" id="MobiDB-lite"/>
    </source>
</evidence>
<evidence type="ECO:0000269" key="3">
    <source>
    </source>
</evidence>
<evidence type="ECO:0000269" key="4">
    <source>
    </source>
</evidence>
<evidence type="ECO:0000269" key="5">
    <source>
    </source>
</evidence>
<evidence type="ECO:0000269" key="6">
    <source>
    </source>
</evidence>
<evidence type="ECO:0000269" key="7">
    <source>
    </source>
</evidence>
<evidence type="ECO:0000269" key="8">
    <source>
    </source>
</evidence>
<evidence type="ECO:0000269" key="9">
    <source>
    </source>
</evidence>
<evidence type="ECO:0000269" key="10">
    <source>
    </source>
</evidence>
<evidence type="ECO:0000269" key="11">
    <source>
    </source>
</evidence>
<evidence type="ECO:0000269" key="12">
    <source>
    </source>
</evidence>
<evidence type="ECO:0000305" key="13"/>
<evidence type="ECO:0000305" key="14">
    <source>
    </source>
</evidence>
<evidence type="ECO:0000312" key="15">
    <source>
        <dbReference type="EMBL" id="AAB38460.1"/>
    </source>
</evidence>
<evidence type="ECO:0007829" key="16">
    <source>
        <dbReference type="PDB" id="1ZP7"/>
    </source>
</evidence>
<evidence type="ECO:0007829" key="17">
    <source>
        <dbReference type="PDB" id="5FDK"/>
    </source>
</evidence>
<accession>P39792</accession>
<reference key="1">
    <citation type="journal article" date="1995" name="J. Bacteriol.">
        <title>Cloning, nucleotide sequence, and mutagenesis of the Bacillus subtilis ponA operon, which codes for penicillin-binding protein (PBP) 1 and a PBP-related factor.</title>
        <authorList>
            <person name="Popham D.L."/>
            <person name="Setlow P."/>
        </authorList>
    </citation>
    <scope>NUCLEOTIDE SEQUENCE [GENOMIC DNA]</scope>
    <source>
        <strain>168</strain>
    </source>
</reference>
<reference key="2">
    <citation type="journal article" date="1996" name="Microbiology">
        <title>Sequence analysis of the Bacillus subtilis chromosome region between the serA and kdg loci cloned in a yeast artificial chromosome.</title>
        <authorList>
            <person name="Sorokin A.V."/>
            <person name="Azevedo V."/>
            <person name="Zumstein E."/>
            <person name="Galleron N."/>
            <person name="Ehrlich S.D."/>
            <person name="Serror P."/>
        </authorList>
    </citation>
    <scope>NUCLEOTIDE SEQUENCE [GENOMIC DNA]</scope>
    <source>
        <strain>168 / Marburg / ATCC 6051 / DSM 10 / JCM 1465 / NBRC 13719 / NCIMB 3610 / NRRL NRS-744 / VKM B-501</strain>
    </source>
</reference>
<reference key="3">
    <citation type="journal article" date="1997" name="Nature">
        <title>The complete genome sequence of the Gram-positive bacterium Bacillus subtilis.</title>
        <authorList>
            <person name="Kunst F."/>
            <person name="Ogasawara N."/>
            <person name="Moszer I."/>
            <person name="Albertini A.M."/>
            <person name="Alloni G."/>
            <person name="Azevedo V."/>
            <person name="Bertero M.G."/>
            <person name="Bessieres P."/>
            <person name="Bolotin A."/>
            <person name="Borchert S."/>
            <person name="Borriss R."/>
            <person name="Boursier L."/>
            <person name="Brans A."/>
            <person name="Braun M."/>
            <person name="Brignell S.C."/>
            <person name="Bron S."/>
            <person name="Brouillet S."/>
            <person name="Bruschi C.V."/>
            <person name="Caldwell B."/>
            <person name="Capuano V."/>
            <person name="Carter N.M."/>
            <person name="Choi S.-K."/>
            <person name="Codani J.-J."/>
            <person name="Connerton I.F."/>
            <person name="Cummings N.J."/>
            <person name="Daniel R.A."/>
            <person name="Denizot F."/>
            <person name="Devine K.M."/>
            <person name="Duesterhoeft A."/>
            <person name="Ehrlich S.D."/>
            <person name="Emmerson P.T."/>
            <person name="Entian K.-D."/>
            <person name="Errington J."/>
            <person name="Fabret C."/>
            <person name="Ferrari E."/>
            <person name="Foulger D."/>
            <person name="Fritz C."/>
            <person name="Fujita M."/>
            <person name="Fujita Y."/>
            <person name="Fuma S."/>
            <person name="Galizzi A."/>
            <person name="Galleron N."/>
            <person name="Ghim S.-Y."/>
            <person name="Glaser P."/>
            <person name="Goffeau A."/>
            <person name="Golightly E.J."/>
            <person name="Grandi G."/>
            <person name="Guiseppi G."/>
            <person name="Guy B.J."/>
            <person name="Haga K."/>
            <person name="Haiech J."/>
            <person name="Harwood C.R."/>
            <person name="Henaut A."/>
            <person name="Hilbert H."/>
            <person name="Holsappel S."/>
            <person name="Hosono S."/>
            <person name="Hullo M.-F."/>
            <person name="Itaya M."/>
            <person name="Jones L.-M."/>
            <person name="Joris B."/>
            <person name="Karamata D."/>
            <person name="Kasahara Y."/>
            <person name="Klaerr-Blanchard M."/>
            <person name="Klein C."/>
            <person name="Kobayashi Y."/>
            <person name="Koetter P."/>
            <person name="Koningstein G."/>
            <person name="Krogh S."/>
            <person name="Kumano M."/>
            <person name="Kurita K."/>
            <person name="Lapidus A."/>
            <person name="Lardinois S."/>
            <person name="Lauber J."/>
            <person name="Lazarevic V."/>
            <person name="Lee S.-M."/>
            <person name="Levine A."/>
            <person name="Liu H."/>
            <person name="Masuda S."/>
            <person name="Mauel C."/>
            <person name="Medigue C."/>
            <person name="Medina N."/>
            <person name="Mellado R.P."/>
            <person name="Mizuno M."/>
            <person name="Moestl D."/>
            <person name="Nakai S."/>
            <person name="Noback M."/>
            <person name="Noone D."/>
            <person name="O'Reilly M."/>
            <person name="Ogawa K."/>
            <person name="Ogiwara A."/>
            <person name="Oudega B."/>
            <person name="Park S.-H."/>
            <person name="Parro V."/>
            <person name="Pohl T.M."/>
            <person name="Portetelle D."/>
            <person name="Porwollik S."/>
            <person name="Prescott A.M."/>
            <person name="Presecan E."/>
            <person name="Pujic P."/>
            <person name="Purnelle B."/>
            <person name="Rapoport G."/>
            <person name="Rey M."/>
            <person name="Reynolds S."/>
            <person name="Rieger M."/>
            <person name="Rivolta C."/>
            <person name="Rocha E."/>
            <person name="Roche B."/>
            <person name="Rose M."/>
            <person name="Sadaie Y."/>
            <person name="Sato T."/>
            <person name="Scanlan E."/>
            <person name="Schleich S."/>
            <person name="Schroeter R."/>
            <person name="Scoffone F."/>
            <person name="Sekiguchi J."/>
            <person name="Sekowska A."/>
            <person name="Seror S.J."/>
            <person name="Serror P."/>
            <person name="Shin B.-S."/>
            <person name="Soldo B."/>
            <person name="Sorokin A."/>
            <person name="Tacconi E."/>
            <person name="Takagi T."/>
            <person name="Takahashi H."/>
            <person name="Takemaru K."/>
            <person name="Takeuchi M."/>
            <person name="Tamakoshi A."/>
            <person name="Tanaka T."/>
            <person name="Terpstra P."/>
            <person name="Tognoni A."/>
            <person name="Tosato V."/>
            <person name="Uchiyama S."/>
            <person name="Vandenbol M."/>
            <person name="Vannier F."/>
            <person name="Vassarotti A."/>
            <person name="Viari A."/>
            <person name="Wambutt R."/>
            <person name="Wedler E."/>
            <person name="Wedler H."/>
            <person name="Weitzenegger T."/>
            <person name="Winters P."/>
            <person name="Wipat A."/>
            <person name="Yamamoto H."/>
            <person name="Yamane K."/>
            <person name="Yasumoto K."/>
            <person name="Yata K."/>
            <person name="Yoshida K."/>
            <person name="Yoshikawa H.-F."/>
            <person name="Zumstein E."/>
            <person name="Yoshikawa H."/>
            <person name="Danchin A."/>
        </authorList>
    </citation>
    <scope>NUCLEOTIDE SEQUENCE [LARGE SCALE GENOMIC DNA]</scope>
    <source>
        <strain>168</strain>
    </source>
</reference>
<reference key="4">
    <citation type="journal article" date="1998" name="J. Bacteriol.">
        <title>Genetic recombination in Bacillus subtilis 168: effects of recU and recS mutations on DNA repair and homologous recombination.</title>
        <authorList>
            <person name="Fernandez S."/>
            <person name="Sorokin A."/>
            <person name="Alonso J.C."/>
        </authorList>
    </citation>
    <scope>DISRUPTION PHENOTYPE</scope>
    <source>
        <strain>168 / YB886 / BG214</strain>
    </source>
</reference>
<reference key="5">
    <citation type="journal article" date="2000" name="J. Bacteriol.">
        <title>Penicillin-binding protein-related factor A is required for proper chromosome segregation in Bacillus subtilis.</title>
        <authorList>
            <person name="Pedersen L.B."/>
            <person name="Setlow P."/>
        </authorList>
    </citation>
    <scope>CHARACTERIZATION</scope>
    <scope>DISRUPTION PHENOTYPE</scope>
    <source>
        <strain>168 / PS832</strain>
    </source>
</reference>
<reference key="6">
    <citation type="journal article" date="2002" name="Mol. Genet. Genomics">
        <title>Effect of the recU suppressors sms and subA on DNA repair and homologous recombination in Bacillus subtilis.</title>
        <authorList>
            <person name="Carrasco B."/>
            <person name="Fernandez S."/>
            <person name="Asai K."/>
            <person name="Ogasawara N."/>
            <person name="Alonso J.C."/>
        </authorList>
    </citation>
    <scope>DISRUPTION PHENOTYPE</scope>
    <source>
        <strain>168 / YB886 / BG214</strain>
    </source>
</reference>
<reference key="7">
    <citation type="journal article" date="2004" name="Proc. Natl. Acad. Sci. U.S.A.">
        <title>Bacillus subtilis RecU protein cleaves Holliday junctions and anneals single-stranded DNA.</title>
        <authorList>
            <person name="Ayora S."/>
            <person name="Carrasco B."/>
            <person name="Doncel E."/>
            <person name="Lurz R."/>
            <person name="Alonso J.C."/>
        </authorList>
    </citation>
    <scope>FUNCTION</scope>
    <scope>CATALYTIC ACTIVITY</scope>
    <scope>COFACTOR</scope>
    <scope>MASS SPECTROMETRY</scope>
</reference>
<reference key="8">
    <citation type="journal article" date="2005" name="Genetics">
        <title>The RuvAB branch migration translocase and RecU Holliday junction resolvase are required for double-stranded DNA break repair in Bacillus subtilis.</title>
        <authorList>
            <person name="Sanchez H."/>
            <person name="Kidane D."/>
            <person name="Reed P."/>
            <person name="Curtis F.A."/>
            <person name="Cozar M.C."/>
            <person name="Graumann P.L."/>
            <person name="Sharples G.J."/>
            <person name="Alonso J.C."/>
        </authorList>
    </citation>
    <scope>FUNCTION</scope>
    <source>
        <strain>168 / YB886 / BG214</strain>
    </source>
</reference>
<reference key="9">
    <citation type="journal article" date="2008" name="Nucleic Acids Res.">
        <title>The RecU Holliday junction resolvase acts at early stages of homologous recombination.</title>
        <authorList>
            <person name="Canas C."/>
            <person name="Carrasco B."/>
            <person name="Ayora S."/>
            <person name="Alonso J.C."/>
        </authorList>
    </citation>
    <scope>INTERACTION WITH RECA</scope>
    <scope>MUTAGENESIS OF LYS-56 AND ARG-71</scope>
    <scope>SUBUNIT</scope>
    <scope>SS-DNA-BINDING</scope>
    <scope>DISRUPTION PHENOTYPE</scope>
    <source>
        <strain>168 / YB886 / BG214</strain>
    </source>
</reference>
<reference key="10">
    <citation type="journal article" date="2009" name="J. Mol. Biol.">
        <title>The N-terminal region of the RecU Holliday junction resolvase is essential for homologous recombination.</title>
        <authorList>
            <person name="Carrasco B."/>
            <person name="Canas C."/>
            <person name="Sharples G.J."/>
            <person name="Alonso J.C."/>
            <person name="Ayora S."/>
        </authorList>
    </citation>
    <scope>CHARACTERIZATION</scope>
    <scope>THE N-TERMINUS IS ESSENTIAL</scope>
    <scope>SUBUNIT</scope>
    <scope>DNA-BINDING</scope>
    <scope>INTERACTION WITH RUVB</scope>
    <scope>MUTAGENESIS OF 1-MET--GLY-32; PRO-5 AND ARG-31</scope>
    <source>
        <strain>168 / YB886 / BG214</strain>
    </source>
</reference>
<reference key="11">
    <citation type="journal article" date="2017" name="J. Bacteriol.">
        <title>MutS2 Promotes Homologous Recombination in Bacillus subtilis.</title>
        <authorList>
            <person name="Burby P.E."/>
            <person name="Simmons L.A."/>
        </authorList>
    </citation>
    <scope>DISRUPTION PHENOTYPE</scope>
</reference>
<reference key="12">
    <citation type="journal article" date="2020" name="Front. Microbiol.">
        <title>Bacillus subtilis RarA Acts as a Positive RecA Accessory Protein.</title>
        <authorList>
            <person name="Romero H."/>
            <person name="Serrano E."/>
            <person name="Hernandez-Tamayo R."/>
            <person name="Carrasco B."/>
            <person name="Cardenas P.P."/>
            <person name="Ayora S."/>
            <person name="Graumann P.L."/>
            <person name="Alonso J.C."/>
        </authorList>
    </citation>
    <scope>FUNCTION</scope>
    <scope>DISRUPTION PHENOTYPE</scope>
    <source>
        <strain>168 / YB886 / BG214</strain>
    </source>
</reference>
<reference key="13">
    <citation type="journal article" date="2005" name="Structure">
        <title>The structure of Bacillus subtilis RecU Holliday junction resolvase and its role in substrate selection and sequence-specific cleavage.</title>
        <authorList>
            <person name="McGregor N."/>
            <person name="Ayora S."/>
            <person name="Sedelnikova S."/>
            <person name="Carrasco B."/>
            <person name="Alonso J.C."/>
            <person name="Thaw P."/>
            <person name="Rafferty J."/>
        </authorList>
    </citation>
    <scope>X-RAY CRYSTALLOGRAPHY (2.25 ANGSTROMS) IN COMPLEX WITH MAGNESIUM IONS</scope>
    <scope>FUNCTION</scope>
    <scope>MUTAGENESIS OF GLU-36; ASP-88; ASP-99 AND GLU-101</scope>
    <scope>SUBUNIT</scope>
</reference>
<protein>
    <recommendedName>
        <fullName>Holliday junction resolvase RecU</fullName>
        <ecNumber evidence="5">3.1.21.10</ecNumber>
    </recommendedName>
</protein>
<keyword id="KW-0002">3D-structure</keyword>
<keyword id="KW-0963">Cytoplasm</keyword>
<keyword id="KW-0227">DNA damage</keyword>
<keyword id="KW-0233">DNA recombination</keyword>
<keyword id="KW-0234">DNA repair</keyword>
<keyword id="KW-0238">DNA-binding</keyword>
<keyword id="KW-0255">Endonuclease</keyword>
<keyword id="KW-0378">Hydrolase</keyword>
<keyword id="KW-0460">Magnesium</keyword>
<keyword id="KW-0479">Metal-binding</keyword>
<keyword id="KW-0540">Nuclease</keyword>
<keyword id="KW-1185">Reference proteome</keyword>
<organism>
    <name type="scientific">Bacillus subtilis (strain 168)</name>
    <dbReference type="NCBI Taxonomy" id="224308"/>
    <lineage>
        <taxon>Bacteria</taxon>
        <taxon>Bacillati</taxon>
        <taxon>Bacillota</taxon>
        <taxon>Bacilli</taxon>
        <taxon>Bacillales</taxon>
        <taxon>Bacillaceae</taxon>
        <taxon>Bacillus</taxon>
    </lineage>
</organism>
<feature type="chain" id="PRO_0000212296" description="Holliday junction resolvase RecU">
    <location>
        <begin position="1"/>
        <end position="206"/>
    </location>
</feature>
<feature type="region of interest" description="Disordered" evidence="2">
    <location>
        <begin position="1"/>
        <end position="34"/>
    </location>
</feature>
<feature type="compositionally biased region" description="Polar residues" evidence="2">
    <location>
        <begin position="8"/>
        <end position="32"/>
    </location>
</feature>
<feature type="binding site" evidence="1">
    <location>
        <position position="86"/>
    </location>
    <ligand>
        <name>Mg(2+)</name>
        <dbReference type="ChEBI" id="CHEBI:18420"/>
    </ligand>
</feature>
<feature type="binding site">
    <location>
        <position position="88"/>
    </location>
    <ligand>
        <name>Mg(2+)</name>
        <dbReference type="ChEBI" id="CHEBI:18420"/>
    </ligand>
</feature>
<feature type="binding site">
    <location>
        <position position="101"/>
    </location>
    <ligand>
        <name>Mg(2+)</name>
        <dbReference type="ChEBI" id="CHEBI:18420"/>
    </ligand>
</feature>
<feature type="binding site">
    <location>
        <position position="120"/>
    </location>
    <ligand>
        <name>Mg(2+)</name>
        <dbReference type="ChEBI" id="CHEBI:18420"/>
    </ligand>
</feature>
<feature type="site" description="Transition state stabilizer" evidence="1">
    <location>
        <position position="103"/>
    </location>
</feature>
<feature type="mutagenesis site" description="Greatly increased sensitivity to DNA-damaging agents, chromosome segregation defects. Binds DNA but cannot cleave a Holliday junction." evidence="9">
    <location>
        <begin position="1"/>
        <end position="32"/>
    </location>
</feature>
<feature type="mutagenesis site" description="No phenotype." evidence="9">
    <original>P</original>
    <variation>A</variation>
    <location>
        <position position="5"/>
    </location>
</feature>
<feature type="mutagenesis site" description="Greatly increased sensitivity to DNA-damaging agents, chromosome segregation defects. Binds DNA and is able to cleave a Holliday junction." evidence="9">
    <original>R</original>
    <variation>A</variation>
    <location>
        <position position="31"/>
    </location>
</feature>
<feature type="mutagenesis site" description="Loss of activity." evidence="7">
    <original>E</original>
    <variation>A</variation>
    <variation>Q</variation>
    <location>
        <position position="36"/>
    </location>
</feature>
<feature type="mutagenesis site" description="Cleaves Holliday junctions, no interaction with RecA, greatly increased sensitivity to DNA-damaging agents." evidence="8">
    <original>K</original>
    <variation>A</variation>
    <location>
        <position position="56"/>
    </location>
</feature>
<feature type="mutagenesis site" description="Cleaves Holliday junctions, no interaction with RecA, greatly increased sensitivity to DNA-damaging agents." evidence="8">
    <original>R</original>
    <variation>A</variation>
    <location>
        <position position="71"/>
    </location>
</feature>
<feature type="mutagenesis site" description="Loss of activity." evidence="7">
    <original>D</original>
    <variation>A</variation>
    <variation>N</variation>
    <location>
        <position position="88"/>
    </location>
</feature>
<feature type="mutagenesis site" description="Reduces Holliday junction resolution activity 6-fold." evidence="7">
    <original>D</original>
    <variation>A</variation>
    <location>
        <position position="99"/>
    </location>
</feature>
<feature type="mutagenesis site" description="Loss of Holliday junction resolution activity." evidence="7">
    <original>E</original>
    <variation>A</variation>
    <location>
        <position position="101"/>
    </location>
</feature>
<feature type="strand" evidence="17">
    <location>
        <begin position="16"/>
        <end position="20"/>
    </location>
</feature>
<feature type="helix" evidence="16">
    <location>
        <begin position="35"/>
        <end position="48"/>
    </location>
</feature>
<feature type="strand" evidence="16">
    <location>
        <begin position="53"/>
        <end position="56"/>
    </location>
</feature>
<feature type="strand" evidence="17">
    <location>
        <begin position="61"/>
        <end position="65"/>
    </location>
</feature>
<feature type="strand" evidence="17">
    <location>
        <begin position="70"/>
        <end position="72"/>
    </location>
</feature>
<feature type="strand" evidence="17">
    <location>
        <begin position="76"/>
        <end position="81"/>
    </location>
</feature>
<feature type="strand" evidence="16">
    <location>
        <begin position="88"/>
        <end position="93"/>
    </location>
</feature>
<feature type="strand" evidence="16">
    <location>
        <begin position="96"/>
        <end position="104"/>
    </location>
</feature>
<feature type="strand" evidence="16">
    <location>
        <begin position="108"/>
        <end position="112"/>
    </location>
</feature>
<feature type="helix" evidence="16">
    <location>
        <begin position="113"/>
        <end position="115"/>
    </location>
</feature>
<feature type="helix" evidence="16">
    <location>
        <begin position="118"/>
        <end position="129"/>
    </location>
</feature>
<feature type="strand" evidence="16">
    <location>
        <begin position="133"/>
        <end position="140"/>
    </location>
</feature>
<feature type="strand" evidence="16">
    <location>
        <begin position="143"/>
        <end position="148"/>
    </location>
</feature>
<feature type="helix" evidence="16">
    <location>
        <begin position="149"/>
        <end position="157"/>
    </location>
</feature>
<feature type="helix" evidence="16">
    <location>
        <begin position="158"/>
        <end position="160"/>
    </location>
</feature>
<feature type="strand" evidence="16">
    <location>
        <begin position="166"/>
        <end position="168"/>
    </location>
</feature>
<feature type="helix" evidence="16">
    <location>
        <begin position="169"/>
        <end position="175"/>
    </location>
</feature>
<feature type="strand" evidence="16">
    <location>
        <begin position="176"/>
        <end position="178"/>
    </location>
</feature>
<feature type="strand" evidence="16">
    <location>
        <begin position="183"/>
        <end position="187"/>
    </location>
</feature>
<feature type="helix" evidence="16">
    <location>
        <begin position="189"/>
        <end position="197"/>
    </location>
</feature>
<sequence>MIRYPNGKTFQPKHSVSSQNSQKRAPSYSNRGMTLEDDLNETNKYYLTNQIAVIHKKPTPVQIVNVHYPKRSAAVIKEAYFKQSSTTDYNGIYKGRYIDFEAKETKNKTSFPLQNFHDHQIEHMKQVKAQDGICFVIISAFDQVYFLEADKLFYFWDRKEKNGRKSIRKDELEETAYPISLGYAPRIDYISIIEQLYFSPSSGAKG</sequence>
<comment type="function">
    <text evidence="5 6 7 11">Has at least 2 separable functions; Holliday junction resolution with generation of monomeric chromosomes, and negative modulation of RecA activity. Endonuclease that resolves Holliday junction intermediates in genetic recombination. Cleaves mobile four-strand junctions by introducing symmetrical nicks in paired strands. Promotes annealing of linear ssDNA with homologous dsDNA. Required for DNA repair, homologous recombination and chromosome segregation. Partially inhibits the hydrolysis of dATP or rATP by RecA. Holliday junction resolution is stimulated by RuvB.</text>
</comment>
<comment type="catalytic activity">
    <reaction evidence="5">
        <text>Endonucleolytic cleavage at a junction such as a reciprocal single-stranded crossover between two homologous DNA duplexes (Holliday junction).</text>
        <dbReference type="EC" id="3.1.21.10"/>
    </reaction>
</comment>
<comment type="cofactor">
    <cofactor evidence="5">
        <name>Mg(2+)</name>
        <dbReference type="ChEBI" id="CHEBI:18420"/>
    </cofactor>
    <text evidence="5">Binds 1 Mg(2+) ion per subunit.</text>
</comment>
<comment type="subunit">
    <text evidence="7 8 9">Homodimer. Interacts with RuvB.</text>
</comment>
<comment type="subcellular location">
    <subcellularLocation>
        <location evidence="13">Cytoplasm</location>
    </subcellularLocation>
</comment>
<comment type="mass spectrometry"/>
<comment type="disruption phenotype">
    <text evidence="3 4 8 10 11 12">Cells lacking this gene have greatly increased sensitivity to DNA damaging agents (PubMed:10692371, PubMed:32117122). 25-fold decreased plasmid transformation and only slightly reduced chromosomal DNA transformation (PubMed:10692371). A single recU deletion has a 12-fold decreased transformation efficiency with chromosomal DNA; a double mutS2-recU deletion strain has a 57-fold decrease in chromosomal DNA transformation (PubMed:27799325). A single recU deletion rapidly increases RecA expression after DNA damage (PubMed:32117122). Forms anucleate cells 100-times more frequently than wild-type cells during normal growth (PubMed:18684995). DNA damaging agent sensitivity is partially suppressed by disruption of radA and fin (also called sms and subA respectively) (PubMed:11810266).</text>
</comment>
<comment type="similarity">
    <text evidence="13">Belongs to the RecU family.</text>
</comment>
<comment type="caution">
    <text evidence="13">Recombination protein U, a short form proposed to initiate from Met-33, which is equivalent to RecU-delta1-32, is not detected in vivo, and would not be functional. The name is misleading and should no longer be used.</text>
</comment>
<comment type="caution">
    <text evidence="14">Was originally named prfA (Penicillin-binding protein-related factor A, PBP-related factor A) due to its proximity to the ponA gene; this name is misleading and should no longer be used.</text>
</comment>
<dbReference type="EC" id="3.1.21.10" evidence="5"/>
<dbReference type="EMBL" id="U11883">
    <property type="protein sequence ID" value="AAA64946.1"/>
    <property type="molecule type" value="Genomic_DNA"/>
</dbReference>
<dbReference type="EMBL" id="L47838">
    <property type="protein sequence ID" value="AAB38460.1"/>
    <property type="molecule type" value="Genomic_DNA"/>
</dbReference>
<dbReference type="EMBL" id="AL009126">
    <property type="protein sequence ID" value="CAB14147.1"/>
    <property type="molecule type" value="Genomic_DNA"/>
</dbReference>
<dbReference type="PIR" id="I40528">
    <property type="entry name" value="I40528"/>
</dbReference>
<dbReference type="RefSeq" id="NP_390112.1">
    <property type="nucleotide sequence ID" value="NC_000964.3"/>
</dbReference>
<dbReference type="RefSeq" id="WP_004399067.1">
    <property type="nucleotide sequence ID" value="NZ_OZ025638.1"/>
</dbReference>
<dbReference type="PDB" id="1RZN">
    <property type="method" value="X-ray"/>
    <property type="resolution" value="2.30 A"/>
    <property type="chains" value="A/B=2-206"/>
</dbReference>
<dbReference type="PDB" id="1ZP7">
    <property type="method" value="X-ray"/>
    <property type="resolution" value="2.25 A"/>
    <property type="chains" value="A/B=1-206"/>
</dbReference>
<dbReference type="PDB" id="5FDK">
    <property type="method" value="X-ray"/>
    <property type="resolution" value="3.21 A"/>
    <property type="chains" value="A/B/C/D=1-199"/>
</dbReference>
<dbReference type="PDBsum" id="1RZN"/>
<dbReference type="PDBsum" id="1ZP7"/>
<dbReference type="PDBsum" id="5FDK"/>
<dbReference type="SMR" id="P39792"/>
<dbReference type="FunCoup" id="P39792">
    <property type="interactions" value="22"/>
</dbReference>
<dbReference type="STRING" id="224308.BSU22310"/>
<dbReference type="PaxDb" id="224308-BSU22310"/>
<dbReference type="EnsemblBacteria" id="CAB14147">
    <property type="protein sequence ID" value="CAB14147"/>
    <property type="gene ID" value="BSU_22310"/>
</dbReference>
<dbReference type="GeneID" id="939039"/>
<dbReference type="KEGG" id="bsu:BSU22310"/>
<dbReference type="PATRIC" id="fig|224308.179.peg.2435"/>
<dbReference type="eggNOG" id="COG3331">
    <property type="taxonomic scope" value="Bacteria"/>
</dbReference>
<dbReference type="InParanoid" id="P39792"/>
<dbReference type="OrthoDB" id="9783592at2"/>
<dbReference type="PhylomeDB" id="P39792"/>
<dbReference type="BioCyc" id="BSUB:BSU22310-MONOMER"/>
<dbReference type="BRENDA" id="3.1.21.10">
    <property type="organism ID" value="658"/>
</dbReference>
<dbReference type="EvolutionaryTrace" id="P39792"/>
<dbReference type="Proteomes" id="UP000001570">
    <property type="component" value="Chromosome"/>
</dbReference>
<dbReference type="GO" id="GO:0005737">
    <property type="term" value="C:cytoplasm"/>
    <property type="evidence" value="ECO:0007669"/>
    <property type="project" value="UniProtKB-SubCell"/>
</dbReference>
<dbReference type="GO" id="GO:0003677">
    <property type="term" value="F:DNA binding"/>
    <property type="evidence" value="ECO:0007669"/>
    <property type="project" value="UniProtKB-KW"/>
</dbReference>
<dbReference type="GO" id="GO:0004519">
    <property type="term" value="F:endonuclease activity"/>
    <property type="evidence" value="ECO:0007669"/>
    <property type="project" value="UniProtKB-UniRule"/>
</dbReference>
<dbReference type="GO" id="GO:0000287">
    <property type="term" value="F:magnesium ion binding"/>
    <property type="evidence" value="ECO:0007669"/>
    <property type="project" value="UniProtKB-UniRule"/>
</dbReference>
<dbReference type="GO" id="GO:0007059">
    <property type="term" value="P:chromosome segregation"/>
    <property type="evidence" value="ECO:0007669"/>
    <property type="project" value="UniProtKB-UniRule"/>
</dbReference>
<dbReference type="GO" id="GO:0006310">
    <property type="term" value="P:DNA recombination"/>
    <property type="evidence" value="ECO:0007669"/>
    <property type="project" value="UniProtKB-UniRule"/>
</dbReference>
<dbReference type="GO" id="GO:0006281">
    <property type="term" value="P:DNA repair"/>
    <property type="evidence" value="ECO:0000315"/>
    <property type="project" value="CACAO"/>
</dbReference>
<dbReference type="CDD" id="cd22354">
    <property type="entry name" value="RecU-like"/>
    <property type="match status" value="1"/>
</dbReference>
<dbReference type="FunFam" id="3.40.1350.10:FF:000021">
    <property type="entry name" value="Holliday junction resolvase RecU"/>
    <property type="match status" value="1"/>
</dbReference>
<dbReference type="Gene3D" id="3.40.1350.10">
    <property type="match status" value="1"/>
</dbReference>
<dbReference type="HAMAP" id="MF_00130">
    <property type="entry name" value="RecU"/>
    <property type="match status" value="1"/>
</dbReference>
<dbReference type="InterPro" id="IPR004612">
    <property type="entry name" value="Resolv_RecU"/>
</dbReference>
<dbReference type="InterPro" id="IPR011335">
    <property type="entry name" value="Restrct_endonuc-II-like"/>
</dbReference>
<dbReference type="InterPro" id="IPR011856">
    <property type="entry name" value="tRNA_endonuc-like_dom_sf"/>
</dbReference>
<dbReference type="NCBIfam" id="NF002581">
    <property type="entry name" value="PRK02234.1-2"/>
    <property type="match status" value="1"/>
</dbReference>
<dbReference type="NCBIfam" id="NF002584">
    <property type="entry name" value="PRK02234.1-5"/>
    <property type="match status" value="1"/>
</dbReference>
<dbReference type="NCBIfam" id="TIGR00648">
    <property type="entry name" value="recU"/>
    <property type="match status" value="1"/>
</dbReference>
<dbReference type="Pfam" id="PF03838">
    <property type="entry name" value="RecU"/>
    <property type="match status" value="1"/>
</dbReference>
<dbReference type="PIRSF" id="PIRSF037785">
    <property type="entry name" value="RecU"/>
    <property type="match status" value="1"/>
</dbReference>
<dbReference type="SUPFAM" id="SSF52980">
    <property type="entry name" value="Restriction endonuclease-like"/>
    <property type="match status" value="1"/>
</dbReference>
<name>RECU_BACSU</name>
<gene>
    <name type="primary">recU</name>
    <name type="synonym">prfA</name>
    <name evidence="15" type="synonym">yppB</name>
    <name type="ordered locus">BSU22310</name>
</gene>